<organism>
    <name type="scientific">Wolbachia sp. subsp. Drosophila simulans (strain wRi)</name>
    <dbReference type="NCBI Taxonomy" id="66084"/>
    <lineage>
        <taxon>Bacteria</taxon>
        <taxon>Pseudomonadati</taxon>
        <taxon>Pseudomonadota</taxon>
        <taxon>Alphaproteobacteria</taxon>
        <taxon>Rickettsiales</taxon>
        <taxon>Anaplasmataceae</taxon>
        <taxon>Wolbachieae</taxon>
        <taxon>Wolbachia</taxon>
    </lineage>
</organism>
<name>RL4_WOLWR</name>
<comment type="function">
    <text evidence="1">One of the primary rRNA binding proteins, this protein initially binds near the 5'-end of the 23S rRNA. It is important during the early stages of 50S assembly. It makes multiple contacts with different domains of the 23S rRNA in the assembled 50S subunit and ribosome.</text>
</comment>
<comment type="function">
    <text evidence="1">Forms part of the polypeptide exit tunnel.</text>
</comment>
<comment type="subunit">
    <text evidence="1">Part of the 50S ribosomal subunit.</text>
</comment>
<comment type="similarity">
    <text evidence="1">Belongs to the universal ribosomal protein uL4 family.</text>
</comment>
<gene>
    <name evidence="1" type="primary">rplD</name>
    <name type="ordered locus">WRi_005180</name>
</gene>
<proteinExistence type="inferred from homology"/>
<evidence type="ECO:0000255" key="1">
    <source>
        <dbReference type="HAMAP-Rule" id="MF_01328"/>
    </source>
</evidence>
<evidence type="ECO:0000256" key="2">
    <source>
        <dbReference type="SAM" id="MobiDB-lite"/>
    </source>
</evidence>
<evidence type="ECO:0000305" key="3"/>
<keyword id="KW-0687">Ribonucleoprotein</keyword>
<keyword id="KW-0689">Ribosomal protein</keyword>
<keyword id="KW-0694">RNA-binding</keyword>
<keyword id="KW-0699">rRNA-binding</keyword>
<feature type="chain" id="PRO_1000166036" description="Large ribosomal subunit protein uL4">
    <location>
        <begin position="1"/>
        <end position="204"/>
    </location>
</feature>
<feature type="region of interest" description="Disordered" evidence="2">
    <location>
        <begin position="49"/>
        <end position="76"/>
    </location>
</feature>
<sequence>MECNLVNLSNDNVGTAQLNPLIFSAKQKLSILHDIVRWQLAKRRAGTHKTKGISDVSGTTAKPYGQKRTGRARQGSLRSPQFRGGGIIFGPVVRSHTYSLNKKVRKFGLKIALSLKYLNNQVIILDNLNIDVKKTSEMCKCIKNFKFSSFLIVGDYGDDLLRAAKNLHYVDLIKPIGLNVFDILNHECVMLTKDTLKHLEGRLL</sequence>
<reference key="1">
    <citation type="journal article" date="2009" name="Proc. Natl. Acad. Sci. U.S.A.">
        <title>The mosaic genome structure of the Wolbachia wRi strain infecting Drosophila simulans.</title>
        <authorList>
            <person name="Klasson L."/>
            <person name="Westberg J."/>
            <person name="Sapountzis P."/>
            <person name="Naeslund K."/>
            <person name="Lutnaes Y."/>
            <person name="Darby A.C."/>
            <person name="Veneti Z."/>
            <person name="Chen L."/>
            <person name="Braig H.R."/>
            <person name="Garrett R."/>
            <person name="Bourtzis K."/>
            <person name="Andersson S.G."/>
        </authorList>
    </citation>
    <scope>NUCLEOTIDE SEQUENCE [LARGE SCALE GENOMIC DNA]</scope>
    <source>
        <strain>wRi</strain>
    </source>
</reference>
<protein>
    <recommendedName>
        <fullName evidence="1">Large ribosomal subunit protein uL4</fullName>
    </recommendedName>
    <alternativeName>
        <fullName evidence="3">50S ribosomal protein L4</fullName>
    </alternativeName>
</protein>
<accession>C0R308</accession>
<dbReference type="EMBL" id="CP001391">
    <property type="protein sequence ID" value="ACN95300.1"/>
    <property type="molecule type" value="Genomic_DNA"/>
</dbReference>
<dbReference type="RefSeq" id="WP_012673183.1">
    <property type="nucleotide sequence ID" value="NZ_MKIF01000201.1"/>
</dbReference>
<dbReference type="SMR" id="C0R308"/>
<dbReference type="STRING" id="66084.WRi_005180"/>
<dbReference type="KEGG" id="wri:WRi_005180"/>
<dbReference type="HOGENOM" id="CLU_041575_5_1_5"/>
<dbReference type="Proteomes" id="UP000001293">
    <property type="component" value="Chromosome"/>
</dbReference>
<dbReference type="GO" id="GO:1990904">
    <property type="term" value="C:ribonucleoprotein complex"/>
    <property type="evidence" value="ECO:0007669"/>
    <property type="project" value="UniProtKB-KW"/>
</dbReference>
<dbReference type="GO" id="GO:0005840">
    <property type="term" value="C:ribosome"/>
    <property type="evidence" value="ECO:0007669"/>
    <property type="project" value="UniProtKB-KW"/>
</dbReference>
<dbReference type="GO" id="GO:0019843">
    <property type="term" value="F:rRNA binding"/>
    <property type="evidence" value="ECO:0007669"/>
    <property type="project" value="UniProtKB-UniRule"/>
</dbReference>
<dbReference type="GO" id="GO:0003735">
    <property type="term" value="F:structural constituent of ribosome"/>
    <property type="evidence" value="ECO:0007669"/>
    <property type="project" value="InterPro"/>
</dbReference>
<dbReference type="GO" id="GO:0006412">
    <property type="term" value="P:translation"/>
    <property type="evidence" value="ECO:0007669"/>
    <property type="project" value="UniProtKB-UniRule"/>
</dbReference>
<dbReference type="Gene3D" id="3.40.1370.10">
    <property type="match status" value="1"/>
</dbReference>
<dbReference type="HAMAP" id="MF_01328_B">
    <property type="entry name" value="Ribosomal_uL4_B"/>
    <property type="match status" value="1"/>
</dbReference>
<dbReference type="InterPro" id="IPR002136">
    <property type="entry name" value="Ribosomal_uL4"/>
</dbReference>
<dbReference type="InterPro" id="IPR013005">
    <property type="entry name" value="Ribosomal_uL4-like"/>
</dbReference>
<dbReference type="InterPro" id="IPR023574">
    <property type="entry name" value="Ribosomal_uL4_dom_sf"/>
</dbReference>
<dbReference type="NCBIfam" id="TIGR03953">
    <property type="entry name" value="rplD_bact"/>
    <property type="match status" value="1"/>
</dbReference>
<dbReference type="PANTHER" id="PTHR10746">
    <property type="entry name" value="50S RIBOSOMAL PROTEIN L4"/>
    <property type="match status" value="1"/>
</dbReference>
<dbReference type="PANTHER" id="PTHR10746:SF6">
    <property type="entry name" value="LARGE RIBOSOMAL SUBUNIT PROTEIN UL4M"/>
    <property type="match status" value="1"/>
</dbReference>
<dbReference type="Pfam" id="PF00573">
    <property type="entry name" value="Ribosomal_L4"/>
    <property type="match status" value="1"/>
</dbReference>
<dbReference type="SUPFAM" id="SSF52166">
    <property type="entry name" value="Ribosomal protein L4"/>
    <property type="match status" value="1"/>
</dbReference>